<keyword id="KW-0133">Cell shape</keyword>
<keyword id="KW-0961">Cell wall biogenesis/degradation</keyword>
<keyword id="KW-0460">Magnesium</keyword>
<keyword id="KW-0479">Metal-binding</keyword>
<keyword id="KW-0573">Peptidoglycan synthesis</keyword>
<keyword id="KW-1185">Reference proteome</keyword>
<keyword id="KW-0808">Transferase</keyword>
<dbReference type="EC" id="2.5.1.31" evidence="1"/>
<dbReference type="EMBL" id="AE005674">
    <property type="protein sequence ID" value="AAN41826.1"/>
    <property type="molecule type" value="Genomic_DNA"/>
</dbReference>
<dbReference type="EMBL" id="AE014073">
    <property type="protein sequence ID" value="AAP15707.1"/>
    <property type="molecule type" value="Genomic_DNA"/>
</dbReference>
<dbReference type="SMR" id="P60475"/>
<dbReference type="STRING" id="198214.SF0164"/>
<dbReference type="PaxDb" id="198214-SF0164"/>
<dbReference type="KEGG" id="sfl:SF0164"/>
<dbReference type="KEGG" id="sfx:S0167"/>
<dbReference type="PATRIC" id="fig|198214.7.peg.185"/>
<dbReference type="HOGENOM" id="CLU_038505_1_1_6"/>
<dbReference type="Proteomes" id="UP000001006">
    <property type="component" value="Chromosome"/>
</dbReference>
<dbReference type="Proteomes" id="UP000002673">
    <property type="component" value="Chromosome"/>
</dbReference>
<dbReference type="GO" id="GO:0005829">
    <property type="term" value="C:cytosol"/>
    <property type="evidence" value="ECO:0007669"/>
    <property type="project" value="TreeGrafter"/>
</dbReference>
<dbReference type="GO" id="GO:0008834">
    <property type="term" value="F:ditrans,polycis-undecaprenyl-diphosphate synthase [(2E,6E)-farnesyl-diphosphate specific] activity"/>
    <property type="evidence" value="ECO:0007669"/>
    <property type="project" value="UniProtKB-UniRule"/>
</dbReference>
<dbReference type="GO" id="GO:0000287">
    <property type="term" value="F:magnesium ion binding"/>
    <property type="evidence" value="ECO:0007669"/>
    <property type="project" value="UniProtKB-UniRule"/>
</dbReference>
<dbReference type="GO" id="GO:0071555">
    <property type="term" value="P:cell wall organization"/>
    <property type="evidence" value="ECO:0007669"/>
    <property type="project" value="UniProtKB-KW"/>
</dbReference>
<dbReference type="GO" id="GO:0009252">
    <property type="term" value="P:peptidoglycan biosynthetic process"/>
    <property type="evidence" value="ECO:0007669"/>
    <property type="project" value="UniProtKB-UniRule"/>
</dbReference>
<dbReference type="GO" id="GO:0016094">
    <property type="term" value="P:polyprenol biosynthetic process"/>
    <property type="evidence" value="ECO:0007669"/>
    <property type="project" value="TreeGrafter"/>
</dbReference>
<dbReference type="GO" id="GO:0008360">
    <property type="term" value="P:regulation of cell shape"/>
    <property type="evidence" value="ECO:0007669"/>
    <property type="project" value="UniProtKB-KW"/>
</dbReference>
<dbReference type="CDD" id="cd00475">
    <property type="entry name" value="Cis_IPPS"/>
    <property type="match status" value="1"/>
</dbReference>
<dbReference type="FunFam" id="3.40.1180.10:FF:000001">
    <property type="entry name" value="(2E,6E)-farnesyl-diphosphate-specific ditrans,polycis-undecaprenyl-diphosphate synthase"/>
    <property type="match status" value="1"/>
</dbReference>
<dbReference type="Gene3D" id="3.40.1180.10">
    <property type="entry name" value="Decaprenyl diphosphate synthase-like"/>
    <property type="match status" value="1"/>
</dbReference>
<dbReference type="HAMAP" id="MF_01139">
    <property type="entry name" value="ISPT"/>
    <property type="match status" value="1"/>
</dbReference>
<dbReference type="InterPro" id="IPR001441">
    <property type="entry name" value="UPP_synth-like"/>
</dbReference>
<dbReference type="InterPro" id="IPR018520">
    <property type="entry name" value="UPP_synth-like_CS"/>
</dbReference>
<dbReference type="InterPro" id="IPR036424">
    <property type="entry name" value="UPP_synth-like_sf"/>
</dbReference>
<dbReference type="NCBIfam" id="NF007596">
    <property type="entry name" value="PRK10240.1"/>
    <property type="match status" value="1"/>
</dbReference>
<dbReference type="NCBIfam" id="NF011405">
    <property type="entry name" value="PRK14830.1"/>
    <property type="match status" value="1"/>
</dbReference>
<dbReference type="NCBIfam" id="TIGR00055">
    <property type="entry name" value="uppS"/>
    <property type="match status" value="1"/>
</dbReference>
<dbReference type="PANTHER" id="PTHR10291:SF0">
    <property type="entry name" value="DEHYDRODOLICHYL DIPHOSPHATE SYNTHASE 2"/>
    <property type="match status" value="1"/>
</dbReference>
<dbReference type="PANTHER" id="PTHR10291">
    <property type="entry name" value="DEHYDRODOLICHYL DIPHOSPHATE SYNTHASE FAMILY MEMBER"/>
    <property type="match status" value="1"/>
</dbReference>
<dbReference type="Pfam" id="PF01255">
    <property type="entry name" value="Prenyltransf"/>
    <property type="match status" value="1"/>
</dbReference>
<dbReference type="SUPFAM" id="SSF64005">
    <property type="entry name" value="Undecaprenyl diphosphate synthase"/>
    <property type="match status" value="1"/>
</dbReference>
<dbReference type="PROSITE" id="PS01066">
    <property type="entry name" value="UPP_SYNTHASE"/>
    <property type="match status" value="1"/>
</dbReference>
<organism>
    <name type="scientific">Shigella flexneri</name>
    <dbReference type="NCBI Taxonomy" id="623"/>
    <lineage>
        <taxon>Bacteria</taxon>
        <taxon>Pseudomonadati</taxon>
        <taxon>Pseudomonadota</taxon>
        <taxon>Gammaproteobacteria</taxon>
        <taxon>Enterobacterales</taxon>
        <taxon>Enterobacteriaceae</taxon>
        <taxon>Shigella</taxon>
    </lineage>
</organism>
<proteinExistence type="inferred from homology"/>
<name>UPPS_SHIFL</name>
<evidence type="ECO:0000255" key="1">
    <source>
        <dbReference type="HAMAP-Rule" id="MF_01139"/>
    </source>
</evidence>
<protein>
    <recommendedName>
        <fullName evidence="1">Ditrans,polycis-undecaprenyl-diphosphate synthase ((2E,6E)-farnesyl-diphosphate specific)</fullName>
        <ecNumber evidence="1">2.5.1.31</ecNumber>
    </recommendedName>
    <alternativeName>
        <fullName evidence="1">Ditrans,polycis-undecaprenylcistransferase</fullName>
    </alternativeName>
    <alternativeName>
        <fullName evidence="1">Undecaprenyl diphosphate synthase</fullName>
        <shortName evidence="1">UDS</shortName>
    </alternativeName>
    <alternativeName>
        <fullName evidence="1">Undecaprenyl pyrophosphate synthase</fullName>
        <shortName evidence="1">UPP synthase</shortName>
    </alternativeName>
</protein>
<comment type="function">
    <text evidence="1">Catalyzes the sequential condensation of isopentenyl diphosphate (IPP) with (2E,6E)-farnesyl diphosphate (E,E-FPP) to yield (2Z,6Z,10Z,14Z,18Z,22Z,26Z,30Z,34E,38E)-undecaprenyl diphosphate (di-trans,octa-cis-UPP). UPP is the precursor of glycosyl carrier lipid in the biosynthesis of bacterial cell wall polysaccharide components such as peptidoglycan and lipopolysaccharide.</text>
</comment>
<comment type="catalytic activity">
    <reaction evidence="1">
        <text>8 isopentenyl diphosphate + (2E,6E)-farnesyl diphosphate = di-trans,octa-cis-undecaprenyl diphosphate + 8 diphosphate</text>
        <dbReference type="Rhea" id="RHEA:27551"/>
        <dbReference type="ChEBI" id="CHEBI:33019"/>
        <dbReference type="ChEBI" id="CHEBI:58405"/>
        <dbReference type="ChEBI" id="CHEBI:128769"/>
        <dbReference type="ChEBI" id="CHEBI:175763"/>
        <dbReference type="EC" id="2.5.1.31"/>
    </reaction>
</comment>
<comment type="cofactor">
    <cofactor evidence="1">
        <name>Mg(2+)</name>
        <dbReference type="ChEBI" id="CHEBI:18420"/>
    </cofactor>
    <text evidence="1">Binds 2 magnesium ions per subunit.</text>
</comment>
<comment type="subunit">
    <text evidence="1">Homodimer.</text>
</comment>
<comment type="similarity">
    <text evidence="1">Belongs to the UPP synthase family.</text>
</comment>
<accession>P60475</accession>
<accession>P75668</accession>
<accession>Q47675</accession>
<accession>Q9R2E4</accession>
<sequence>MMLSATQPLSEKLPAHGCRHVAIIMDGNGRWAKKQGKIRAFGHKAGAKSVRRAVSFAANNGIEALTLYAFSSENWNRPAQEVSALMELFVWALDSEVKSLHRHNVRLRIIGDTSRFNSRLQERIRKSEALTAGNTGLTLNIAANYGGRWDIVQGVRQLAEKVQQGNLQPDQIDEEMLNQHVCMHELAPVDLVIRTGGEHRISNFLLWQIAYAELYFTDVLWPDFDEQDFEGALNAFANRERRFGGTEPGDETA</sequence>
<gene>
    <name evidence="1" type="primary">uppS</name>
    <name type="ordered locus">SF0164</name>
    <name type="ordered locus">S0167</name>
</gene>
<reference key="1">
    <citation type="journal article" date="2002" name="Nucleic Acids Res.">
        <title>Genome sequence of Shigella flexneri 2a: insights into pathogenicity through comparison with genomes of Escherichia coli K12 and O157.</title>
        <authorList>
            <person name="Jin Q."/>
            <person name="Yuan Z."/>
            <person name="Xu J."/>
            <person name="Wang Y."/>
            <person name="Shen Y."/>
            <person name="Lu W."/>
            <person name="Wang J."/>
            <person name="Liu H."/>
            <person name="Yang J."/>
            <person name="Yang F."/>
            <person name="Zhang X."/>
            <person name="Zhang J."/>
            <person name="Yang G."/>
            <person name="Wu H."/>
            <person name="Qu D."/>
            <person name="Dong J."/>
            <person name="Sun L."/>
            <person name="Xue Y."/>
            <person name="Zhao A."/>
            <person name="Gao Y."/>
            <person name="Zhu J."/>
            <person name="Kan B."/>
            <person name="Ding K."/>
            <person name="Chen S."/>
            <person name="Cheng H."/>
            <person name="Yao Z."/>
            <person name="He B."/>
            <person name="Chen R."/>
            <person name="Ma D."/>
            <person name="Qiang B."/>
            <person name="Wen Y."/>
            <person name="Hou Y."/>
            <person name="Yu J."/>
        </authorList>
    </citation>
    <scope>NUCLEOTIDE SEQUENCE [LARGE SCALE GENOMIC DNA]</scope>
    <source>
        <strain>301 / Serotype 2a</strain>
    </source>
</reference>
<reference key="2">
    <citation type="journal article" date="2003" name="Infect. Immun.">
        <title>Complete genome sequence and comparative genomics of Shigella flexneri serotype 2a strain 2457T.</title>
        <authorList>
            <person name="Wei J."/>
            <person name="Goldberg M.B."/>
            <person name="Burland V."/>
            <person name="Venkatesan M.M."/>
            <person name="Deng W."/>
            <person name="Fournier G."/>
            <person name="Mayhew G.F."/>
            <person name="Plunkett G. III"/>
            <person name="Rose D.J."/>
            <person name="Darling A."/>
            <person name="Mau B."/>
            <person name="Perna N.T."/>
            <person name="Payne S.M."/>
            <person name="Runyen-Janecky L.J."/>
            <person name="Zhou S."/>
            <person name="Schwartz D.C."/>
            <person name="Blattner F.R."/>
        </authorList>
    </citation>
    <scope>NUCLEOTIDE SEQUENCE [LARGE SCALE GENOMIC DNA]</scope>
    <source>
        <strain>ATCC 700930 / 2457T / Serotype 2a</strain>
    </source>
</reference>
<feature type="chain" id="PRO_0000123670" description="Ditrans,polycis-undecaprenyl-diphosphate synthase ((2E,6E)-farnesyl-diphosphate specific)">
    <location>
        <begin position="1"/>
        <end position="253"/>
    </location>
</feature>
<feature type="active site" evidence="1">
    <location>
        <position position="26"/>
    </location>
</feature>
<feature type="active site" description="Proton acceptor" evidence="1">
    <location>
        <position position="74"/>
    </location>
</feature>
<feature type="binding site" evidence="1">
    <location>
        <position position="26"/>
    </location>
    <ligand>
        <name>Mg(2+)</name>
        <dbReference type="ChEBI" id="CHEBI:18420"/>
    </ligand>
</feature>
<feature type="binding site" evidence="1">
    <location>
        <begin position="27"/>
        <end position="30"/>
    </location>
    <ligand>
        <name>substrate</name>
    </ligand>
</feature>
<feature type="binding site" evidence="1">
    <location>
        <position position="31"/>
    </location>
    <ligand>
        <name>substrate</name>
    </ligand>
</feature>
<feature type="binding site" evidence="1">
    <location>
        <position position="39"/>
    </location>
    <ligand>
        <name>substrate</name>
    </ligand>
</feature>
<feature type="binding site" evidence="1">
    <location>
        <position position="43"/>
    </location>
    <ligand>
        <name>substrate</name>
    </ligand>
</feature>
<feature type="binding site" evidence="1">
    <location>
        <begin position="71"/>
        <end position="73"/>
    </location>
    <ligand>
        <name>substrate</name>
    </ligand>
</feature>
<feature type="binding site" evidence="1">
    <location>
        <position position="75"/>
    </location>
    <ligand>
        <name>substrate</name>
    </ligand>
</feature>
<feature type="binding site" evidence="1">
    <location>
        <position position="77"/>
    </location>
    <ligand>
        <name>substrate</name>
    </ligand>
</feature>
<feature type="binding site" evidence="1">
    <location>
        <position position="194"/>
    </location>
    <ligand>
        <name>substrate</name>
    </ligand>
</feature>
<feature type="binding site" evidence="1">
    <location>
        <position position="199"/>
    </location>
    <ligand>
        <name>Mg(2+)</name>
        <dbReference type="ChEBI" id="CHEBI:18420"/>
    </ligand>
</feature>
<feature type="binding site" evidence="1">
    <location>
        <begin position="200"/>
        <end position="202"/>
    </location>
    <ligand>
        <name>substrate</name>
    </ligand>
</feature>
<feature type="binding site" evidence="1">
    <location>
        <position position="213"/>
    </location>
    <ligand>
        <name>Mg(2+)</name>
        <dbReference type="ChEBI" id="CHEBI:18420"/>
    </ligand>
</feature>